<protein>
    <recommendedName>
        <fullName>Interleukin-12 subunit alpha</fullName>
        <shortName>IL-12A</shortName>
    </recommendedName>
    <alternativeName>
        <fullName>Cytotoxic lymphocyte maturation factor 35 kDa subunit</fullName>
        <shortName>CLMF p35</shortName>
    </alternativeName>
    <alternativeName>
        <fullName>IL-12 subunit p35</fullName>
    </alternativeName>
</protein>
<accession>Q28233</accession>
<keyword id="KW-0202">Cytokine</keyword>
<keyword id="KW-1015">Disulfide bond</keyword>
<keyword id="KW-0325">Glycoprotein</keyword>
<keyword id="KW-0339">Growth factor</keyword>
<keyword id="KW-0964">Secreted</keyword>
<keyword id="KW-0732">Signal</keyword>
<dbReference type="EMBL" id="U57751">
    <property type="protein sequence ID" value="AAB02257.1"/>
    <property type="molecule type" value="mRNA"/>
</dbReference>
<dbReference type="RefSeq" id="XP_043731185.1">
    <property type="nucleotide sequence ID" value="XM_043875250.1"/>
</dbReference>
<dbReference type="SMR" id="Q28233"/>
<dbReference type="GlyCosmos" id="Q28233">
    <property type="glycosylation" value="2 sites, No reported glycans"/>
</dbReference>
<dbReference type="GeneID" id="122675999"/>
<dbReference type="GO" id="GO:0005615">
    <property type="term" value="C:extracellular space"/>
    <property type="evidence" value="ECO:0007669"/>
    <property type="project" value="UniProtKB-KW"/>
</dbReference>
<dbReference type="GO" id="GO:0005125">
    <property type="term" value="F:cytokine activity"/>
    <property type="evidence" value="ECO:0007669"/>
    <property type="project" value="UniProtKB-KW"/>
</dbReference>
<dbReference type="GO" id="GO:0008083">
    <property type="term" value="F:growth factor activity"/>
    <property type="evidence" value="ECO:0007669"/>
    <property type="project" value="UniProtKB-KW"/>
</dbReference>
<dbReference type="GO" id="GO:0005143">
    <property type="term" value="F:interleukin-12 receptor binding"/>
    <property type="evidence" value="ECO:0007669"/>
    <property type="project" value="InterPro"/>
</dbReference>
<dbReference type="GO" id="GO:0006955">
    <property type="term" value="P:immune response"/>
    <property type="evidence" value="ECO:0007669"/>
    <property type="project" value="InterPro"/>
</dbReference>
<dbReference type="FunFam" id="1.20.1250.10:FF:000020">
    <property type="entry name" value="Interleukin-12 subunit alpha"/>
    <property type="match status" value="1"/>
</dbReference>
<dbReference type="Gene3D" id="1.20.1250.10">
    <property type="match status" value="1"/>
</dbReference>
<dbReference type="InterPro" id="IPR009079">
    <property type="entry name" value="4_helix_cytokine-like_core"/>
</dbReference>
<dbReference type="InterPro" id="IPR050676">
    <property type="entry name" value="IL-12"/>
</dbReference>
<dbReference type="InterPro" id="IPR004281">
    <property type="entry name" value="IL-12_alpha"/>
</dbReference>
<dbReference type="PANTHER" id="PTHR48485:SF1">
    <property type="entry name" value="INTERLEUKIN-12 SUBUNIT ALPHA"/>
    <property type="match status" value="1"/>
</dbReference>
<dbReference type="PANTHER" id="PTHR48485">
    <property type="entry name" value="INTERLEUKIN-12 SUBUNIT BETA-RELATED"/>
    <property type="match status" value="1"/>
</dbReference>
<dbReference type="Pfam" id="PF03039">
    <property type="entry name" value="IL12"/>
    <property type="match status" value="1"/>
</dbReference>
<dbReference type="SUPFAM" id="SSF47266">
    <property type="entry name" value="4-helical cytokines"/>
    <property type="match status" value="1"/>
</dbReference>
<proteinExistence type="evidence at transcript level"/>
<reference key="1">
    <citation type="journal article" date="1999" name="DNA Seq.">
        <title>The characterisation of a cervine immunoregulatory cytokine, interleukin 12.</title>
        <authorList>
            <person name="Lockhart E."/>
            <person name="Slobbe L."/>
            <person name="Buchan G."/>
        </authorList>
    </citation>
    <scope>NUCLEOTIDE SEQUENCE [MRNA]</scope>
    <scope>SUBCELLULAR LOCATION</scope>
</reference>
<evidence type="ECO:0000250" key="1"/>
<evidence type="ECO:0000250" key="2">
    <source>
        <dbReference type="UniProtKB" id="P29459"/>
    </source>
</evidence>
<evidence type="ECO:0000250" key="3">
    <source>
        <dbReference type="UniProtKB" id="P43431"/>
    </source>
</evidence>
<evidence type="ECO:0000255" key="4"/>
<evidence type="ECO:0000269" key="5">
    <source>
    </source>
</evidence>
<evidence type="ECO:0000305" key="6"/>
<feature type="signal peptide" evidence="1">
    <location>
        <begin position="1"/>
        <end position="25"/>
    </location>
</feature>
<feature type="chain" id="PRO_0000015600" description="Interleukin-12 subunit alpha">
    <location>
        <begin position="26"/>
        <end position="221"/>
    </location>
</feature>
<feature type="glycosylation site" description="N-linked (GlcNAc...) asparagine" evidence="4">
    <location>
        <position position="41"/>
    </location>
</feature>
<feature type="glycosylation site" description="N-linked (GlcNAc...) asparagine" evidence="4">
    <location>
        <position position="95"/>
    </location>
</feature>
<feature type="disulfide bond" evidence="2">
    <location>
        <begin position="39"/>
        <end position="112"/>
    </location>
</feature>
<feature type="disulfide bond" evidence="1">
    <location>
        <begin position="66"/>
        <end position="198"/>
    </location>
</feature>
<feature type="disulfide bond" evidence="1">
    <location>
        <begin position="87"/>
        <end position="125"/>
    </location>
</feature>
<feature type="disulfide bond" description="Interchain (with C-200 in IL12B)" evidence="1">
    <location>
        <position position="98"/>
    </location>
</feature>
<sequence length="221" mass="24899">MCPLRSLLLLSTLVLLHHLPHLSLGRSLPPTTAGPGRSCLNYSQNLLRAVSDTLQKARQTLEFYSCTSEEIDHEDITKDKTSTVEACLPLELATNESCLVSRETSLITHGSCLASGKTSFMTTLCLKSIYEDLKMYHMEFQAMNAKLLMDPKRQIFLDQNMLAAIAELMQALNFNSETVPQKPSLEEMDFYKTKVKLCILLHAFRIRAVTIDRMMSYLSSS</sequence>
<name>IL12A_CEREL</name>
<comment type="function">
    <text evidence="2 3">Heterodimerizes with IL12B to form the IL-12 cytokine or with EBI3/IL27B to form the IL-35 cytokine. IL-12 is primarily produced by professional antigen-presenting cells (APCs) such as B-cells and dendritic cells (DCs) as well as macrophages and granulocytes and regulates T-cell and natural killer-cell responses, induces the production of interferon-gamma (IFN-gamma), favors the differentiation of T-helper 1 (Th1) cells and is an important link between innate resistance and adaptive immunity. Mechanistically, exerts its biological effects through a receptor composed of IL12R1 and IL12R2 subunits. Binding to the receptor results in the rapid tyrosine phosphorylation of a number of cellular substrates including the JAK family kinases TYK2 and JAK2. In turn, recruited STAT4 gets phosphorylated and translocates to the nucleus where it regulates cytokine/growth factor responsive genes (By similarity). As part of IL-35, plays essential roles in maintaining the immune homeostasis of the liver microenvironment and also functions as an immune-suppressive cytokine (By similarity). Mediates biological events through unconventional receptors composed of IL12RB2 and gp130/IL6ST heterodimers or homodimers. Signaling requires the transcription factors STAT1 and STAT4, which form a unique heterodimer that binds to distinct DNA sites (By similarity).</text>
</comment>
<comment type="subunit">
    <text evidence="2 3">Heterodimer with IL12B; disulfide-linked. This heterodimer is known as interleukin IL-12. Heterodimer with EBI3/IL27B; not disulfide-linked. This heterodimer is known as interleukin IL-35. Interacts with NBR1; this interaction promotes IL-12 secretion (By similarity).</text>
</comment>
<comment type="subcellular location">
    <subcellularLocation>
        <location evidence="5">Secreted</location>
    </subcellularLocation>
</comment>
<comment type="similarity">
    <text evidence="6">Belongs to the IL-6 superfamily.</text>
</comment>
<gene>
    <name type="primary">IL12A</name>
</gene>
<organism>
    <name type="scientific">Cervus elaphus</name>
    <name type="common">Red deer</name>
    <dbReference type="NCBI Taxonomy" id="9860"/>
    <lineage>
        <taxon>Eukaryota</taxon>
        <taxon>Metazoa</taxon>
        <taxon>Chordata</taxon>
        <taxon>Craniata</taxon>
        <taxon>Vertebrata</taxon>
        <taxon>Euteleostomi</taxon>
        <taxon>Mammalia</taxon>
        <taxon>Eutheria</taxon>
        <taxon>Laurasiatheria</taxon>
        <taxon>Artiodactyla</taxon>
        <taxon>Ruminantia</taxon>
        <taxon>Pecora</taxon>
        <taxon>Cervidae</taxon>
        <taxon>Cervinae</taxon>
        <taxon>Cervus</taxon>
    </lineage>
</organism>